<feature type="chain" id="PRO_0000428474" description="Lysine--tRNA ligase 1">
    <location>
        <begin position="1"/>
        <end position="505"/>
    </location>
</feature>
<feature type="binding site" evidence="1">
    <location>
        <position position="415"/>
    </location>
    <ligand>
        <name>Mg(2+)</name>
        <dbReference type="ChEBI" id="CHEBI:18420"/>
        <label>1</label>
    </ligand>
</feature>
<feature type="binding site" evidence="1">
    <location>
        <position position="422"/>
    </location>
    <ligand>
        <name>Mg(2+)</name>
        <dbReference type="ChEBI" id="CHEBI:18420"/>
        <label>1</label>
    </ligand>
</feature>
<feature type="binding site" evidence="1">
    <location>
        <position position="422"/>
    </location>
    <ligand>
        <name>Mg(2+)</name>
        <dbReference type="ChEBI" id="CHEBI:18420"/>
        <label>2</label>
    </ligand>
</feature>
<gene>
    <name type="primary">lysS1</name>
    <name type="synonym">lysS</name>
    <name type="ordered locus">MT3705</name>
</gene>
<dbReference type="EC" id="6.1.1.6"/>
<dbReference type="EMBL" id="AE000516">
    <property type="protein sequence ID" value="AAK48062.1"/>
    <property type="molecule type" value="Genomic_DNA"/>
</dbReference>
<dbReference type="PIR" id="G70954">
    <property type="entry name" value="G70954"/>
</dbReference>
<dbReference type="RefSeq" id="WP_003419514.1">
    <property type="nucleotide sequence ID" value="NZ_KK341227.1"/>
</dbReference>
<dbReference type="SMR" id="P9WFU8"/>
<dbReference type="KEGG" id="mtc:MT3705"/>
<dbReference type="PATRIC" id="fig|83331.31.peg.3987"/>
<dbReference type="HOGENOM" id="CLU_008255_6_0_11"/>
<dbReference type="Proteomes" id="UP000001020">
    <property type="component" value="Chromosome"/>
</dbReference>
<dbReference type="GO" id="GO:0005829">
    <property type="term" value="C:cytosol"/>
    <property type="evidence" value="ECO:0007669"/>
    <property type="project" value="TreeGrafter"/>
</dbReference>
<dbReference type="GO" id="GO:0005524">
    <property type="term" value="F:ATP binding"/>
    <property type="evidence" value="ECO:0007669"/>
    <property type="project" value="UniProtKB-UniRule"/>
</dbReference>
<dbReference type="GO" id="GO:0004824">
    <property type="term" value="F:lysine-tRNA ligase activity"/>
    <property type="evidence" value="ECO:0007669"/>
    <property type="project" value="UniProtKB-UniRule"/>
</dbReference>
<dbReference type="GO" id="GO:0000287">
    <property type="term" value="F:magnesium ion binding"/>
    <property type="evidence" value="ECO:0007669"/>
    <property type="project" value="UniProtKB-UniRule"/>
</dbReference>
<dbReference type="GO" id="GO:0000049">
    <property type="term" value="F:tRNA binding"/>
    <property type="evidence" value="ECO:0007669"/>
    <property type="project" value="TreeGrafter"/>
</dbReference>
<dbReference type="GO" id="GO:0006430">
    <property type="term" value="P:lysyl-tRNA aminoacylation"/>
    <property type="evidence" value="ECO:0007669"/>
    <property type="project" value="UniProtKB-UniRule"/>
</dbReference>
<dbReference type="CDD" id="cd04322">
    <property type="entry name" value="LysRS_N"/>
    <property type="match status" value="1"/>
</dbReference>
<dbReference type="FunFam" id="2.40.50.140:FF:000024">
    <property type="entry name" value="Lysine--tRNA ligase"/>
    <property type="match status" value="1"/>
</dbReference>
<dbReference type="FunFam" id="3.30.930.10:FF:000079">
    <property type="entry name" value="Lysine--tRNA ligase 1"/>
    <property type="match status" value="1"/>
</dbReference>
<dbReference type="Gene3D" id="3.30.930.10">
    <property type="entry name" value="Bira Bifunctional Protein, Domain 2"/>
    <property type="match status" value="1"/>
</dbReference>
<dbReference type="Gene3D" id="2.40.50.140">
    <property type="entry name" value="Nucleic acid-binding proteins"/>
    <property type="match status" value="1"/>
</dbReference>
<dbReference type="HAMAP" id="MF_00252">
    <property type="entry name" value="Lys_tRNA_synth_class2"/>
    <property type="match status" value="1"/>
</dbReference>
<dbReference type="InterPro" id="IPR004364">
    <property type="entry name" value="Aa-tRNA-synt_II"/>
</dbReference>
<dbReference type="InterPro" id="IPR006195">
    <property type="entry name" value="aa-tRNA-synth_II"/>
</dbReference>
<dbReference type="InterPro" id="IPR045864">
    <property type="entry name" value="aa-tRNA-synth_II/BPL/LPL"/>
</dbReference>
<dbReference type="InterPro" id="IPR002313">
    <property type="entry name" value="Lys-tRNA-ligase_II"/>
</dbReference>
<dbReference type="InterPro" id="IPR044136">
    <property type="entry name" value="Lys-tRNA-ligase_II_N"/>
</dbReference>
<dbReference type="InterPro" id="IPR018149">
    <property type="entry name" value="Lys-tRNA-synth_II_C"/>
</dbReference>
<dbReference type="InterPro" id="IPR012340">
    <property type="entry name" value="NA-bd_OB-fold"/>
</dbReference>
<dbReference type="InterPro" id="IPR004365">
    <property type="entry name" value="NA-bd_OB_tRNA"/>
</dbReference>
<dbReference type="NCBIfam" id="TIGR00499">
    <property type="entry name" value="lysS_bact"/>
    <property type="match status" value="1"/>
</dbReference>
<dbReference type="NCBIfam" id="NF001756">
    <property type="entry name" value="PRK00484.1"/>
    <property type="match status" value="1"/>
</dbReference>
<dbReference type="PANTHER" id="PTHR42918:SF15">
    <property type="entry name" value="LYSINE--TRNA LIGASE, CHLOROPLASTIC_MITOCHONDRIAL"/>
    <property type="match status" value="1"/>
</dbReference>
<dbReference type="PANTHER" id="PTHR42918">
    <property type="entry name" value="LYSYL-TRNA SYNTHETASE"/>
    <property type="match status" value="1"/>
</dbReference>
<dbReference type="Pfam" id="PF00152">
    <property type="entry name" value="tRNA-synt_2"/>
    <property type="match status" value="1"/>
</dbReference>
<dbReference type="Pfam" id="PF01336">
    <property type="entry name" value="tRNA_anti-codon"/>
    <property type="match status" value="1"/>
</dbReference>
<dbReference type="PRINTS" id="PR00982">
    <property type="entry name" value="TRNASYNTHLYS"/>
</dbReference>
<dbReference type="SUPFAM" id="SSF55681">
    <property type="entry name" value="Class II aaRS and biotin synthetases"/>
    <property type="match status" value="1"/>
</dbReference>
<dbReference type="SUPFAM" id="SSF50249">
    <property type="entry name" value="Nucleic acid-binding proteins"/>
    <property type="match status" value="1"/>
</dbReference>
<dbReference type="PROSITE" id="PS50862">
    <property type="entry name" value="AA_TRNA_LIGASE_II"/>
    <property type="match status" value="1"/>
</dbReference>
<organism>
    <name type="scientific">Mycobacterium tuberculosis (strain CDC 1551 / Oshkosh)</name>
    <dbReference type="NCBI Taxonomy" id="83331"/>
    <lineage>
        <taxon>Bacteria</taxon>
        <taxon>Bacillati</taxon>
        <taxon>Actinomycetota</taxon>
        <taxon>Actinomycetes</taxon>
        <taxon>Mycobacteriales</taxon>
        <taxon>Mycobacteriaceae</taxon>
        <taxon>Mycobacterium</taxon>
        <taxon>Mycobacterium tuberculosis complex</taxon>
    </lineage>
</organism>
<reference key="1">
    <citation type="journal article" date="2002" name="J. Bacteriol.">
        <title>Whole-genome comparison of Mycobacterium tuberculosis clinical and laboratory strains.</title>
        <authorList>
            <person name="Fleischmann R.D."/>
            <person name="Alland D."/>
            <person name="Eisen J.A."/>
            <person name="Carpenter L."/>
            <person name="White O."/>
            <person name="Peterson J.D."/>
            <person name="DeBoy R.T."/>
            <person name="Dodson R.J."/>
            <person name="Gwinn M.L."/>
            <person name="Haft D.H."/>
            <person name="Hickey E.K."/>
            <person name="Kolonay J.F."/>
            <person name="Nelson W.C."/>
            <person name="Umayam L.A."/>
            <person name="Ermolaeva M.D."/>
            <person name="Salzberg S.L."/>
            <person name="Delcher A."/>
            <person name="Utterback T.R."/>
            <person name="Weidman J.F."/>
            <person name="Khouri H.M."/>
            <person name="Gill J."/>
            <person name="Mikula A."/>
            <person name="Bishai W."/>
            <person name="Jacobs W.R. Jr."/>
            <person name="Venter J.C."/>
            <person name="Fraser C.M."/>
        </authorList>
    </citation>
    <scope>NUCLEOTIDE SEQUENCE [LARGE SCALE GENOMIC DNA]</scope>
    <source>
        <strain>CDC 1551 / Oshkosh</strain>
    </source>
</reference>
<keyword id="KW-0030">Aminoacyl-tRNA synthetase</keyword>
<keyword id="KW-0067">ATP-binding</keyword>
<keyword id="KW-0963">Cytoplasm</keyword>
<keyword id="KW-0436">Ligase</keyword>
<keyword id="KW-0460">Magnesium</keyword>
<keyword id="KW-0479">Metal-binding</keyword>
<keyword id="KW-0547">Nucleotide-binding</keyword>
<keyword id="KW-0648">Protein biosynthesis</keyword>
<keyword id="KW-1185">Reference proteome</keyword>
<evidence type="ECO:0000250" key="1"/>
<evidence type="ECO:0000305" key="2"/>
<protein>
    <recommendedName>
        <fullName>Lysine--tRNA ligase 1</fullName>
        <ecNumber>6.1.1.6</ecNumber>
    </recommendedName>
    <alternativeName>
        <fullName>Lysyl-tRNA synthetase 1</fullName>
        <shortName>LysRS 1</shortName>
    </alternativeName>
</protein>
<name>SYK1_MYCTO</name>
<proteinExistence type="inferred from homology"/>
<sequence>MSAADTAEDLPEQFRIRRDKRARLLAQGRDPYPVAVPRTHTLAEVRAAHPDLPIDTATEDIVGVAGRVIFARNSGKLCFATLQDGDGTQLQVMISLDKVGQAALDAWKADVDLGDIVYVHGAVISSRRGELSVLADCWRIAAKSLRPLPVAHKEMSEESRVRQRYVDLIVRPEARAVARLRIAVVRAIRTALQRRGFLEVETPVLQTLAGGAAARPFATHSNALDIDLYLRIAPELFLKRCIVGGFDKVFELNRVFRNEGADSTHSPEFSMLETYQTYGTYDDSAVVTRELIQEVADEAIGTRQLPLPDGSVYDIDGEWATIQMYPSLSVALGEEITPQTTVDRLRGIADSLGLEKDPAIHDNRGFGHGKLIEELWERTVGKSLSAPTFVKDFPVQTTPLTRQHRSIPGVTEKWDLYLRGIELATGYSELSDPVVQRERFADQARAAAAGDDEAMVLDEDFLAALEYGMPPCTGTGMGIDRLLMSLTGLSIRETVLFPIVRPHSN</sequence>
<comment type="catalytic activity">
    <reaction>
        <text>tRNA(Lys) + L-lysine + ATP = L-lysyl-tRNA(Lys) + AMP + diphosphate</text>
        <dbReference type="Rhea" id="RHEA:20792"/>
        <dbReference type="Rhea" id="RHEA-COMP:9696"/>
        <dbReference type="Rhea" id="RHEA-COMP:9697"/>
        <dbReference type="ChEBI" id="CHEBI:30616"/>
        <dbReference type="ChEBI" id="CHEBI:32551"/>
        <dbReference type="ChEBI" id="CHEBI:33019"/>
        <dbReference type="ChEBI" id="CHEBI:78442"/>
        <dbReference type="ChEBI" id="CHEBI:78529"/>
        <dbReference type="ChEBI" id="CHEBI:456215"/>
        <dbReference type="EC" id="6.1.1.6"/>
    </reaction>
</comment>
<comment type="cofactor">
    <cofactor evidence="1">
        <name>Mg(2+)</name>
        <dbReference type="ChEBI" id="CHEBI:18420"/>
    </cofactor>
    <text evidence="1">Binds 3 Mg(2+) ions per subunit.</text>
</comment>
<comment type="subunit">
    <text evidence="1">Homodimer.</text>
</comment>
<comment type="subcellular location">
    <subcellularLocation>
        <location evidence="1">Cytoplasm</location>
    </subcellularLocation>
</comment>
<comment type="miscellaneous">
    <text>There are two lysyl-tRNA ligases in M.tuberculosis.</text>
</comment>
<comment type="similarity">
    <text evidence="2">Belongs to the class-II aminoacyl-tRNA synthetase family.</text>
</comment>
<accession>P9WFU8</accession>
<accession>L0TFZ4</accession>
<accession>O06284</accession>
<accession>P67607</accession>